<organism>
    <name type="scientific">Xylella fastidiosa (strain Temecula1 / ATCC 700964)</name>
    <dbReference type="NCBI Taxonomy" id="183190"/>
    <lineage>
        <taxon>Bacteria</taxon>
        <taxon>Pseudomonadati</taxon>
        <taxon>Pseudomonadota</taxon>
        <taxon>Gammaproteobacteria</taxon>
        <taxon>Lysobacterales</taxon>
        <taxon>Lysobacteraceae</taxon>
        <taxon>Xylella</taxon>
    </lineage>
</organism>
<comment type="function">
    <text evidence="1">Catalyzes the ATP-dependent conversion of 7-carboxy-7-deazaguanine (CDG) to 7-cyano-7-deazaguanine (preQ(0)).</text>
</comment>
<comment type="catalytic activity">
    <reaction evidence="1">
        <text>7-carboxy-7-deazaguanine + NH4(+) + ATP = 7-cyano-7-deazaguanine + ADP + phosphate + H2O + H(+)</text>
        <dbReference type="Rhea" id="RHEA:27982"/>
        <dbReference type="ChEBI" id="CHEBI:15377"/>
        <dbReference type="ChEBI" id="CHEBI:15378"/>
        <dbReference type="ChEBI" id="CHEBI:28938"/>
        <dbReference type="ChEBI" id="CHEBI:30616"/>
        <dbReference type="ChEBI" id="CHEBI:43474"/>
        <dbReference type="ChEBI" id="CHEBI:45075"/>
        <dbReference type="ChEBI" id="CHEBI:61036"/>
        <dbReference type="ChEBI" id="CHEBI:456216"/>
        <dbReference type="EC" id="6.3.4.20"/>
    </reaction>
</comment>
<comment type="cofactor">
    <cofactor evidence="1">
        <name>Zn(2+)</name>
        <dbReference type="ChEBI" id="CHEBI:29105"/>
    </cofactor>
    <text evidence="1">Binds 1 zinc ion per subunit.</text>
</comment>
<comment type="pathway">
    <text evidence="1">Purine metabolism; 7-cyano-7-deazaguanine biosynthesis.</text>
</comment>
<comment type="similarity">
    <text evidence="1">Belongs to the QueC family.</text>
</comment>
<proteinExistence type="inferred from homology"/>
<feature type="chain" id="PRO_0000246968" description="7-cyano-7-deazaguanine synthase">
    <location>
        <begin position="1"/>
        <end position="230"/>
    </location>
</feature>
<feature type="binding site" evidence="1">
    <location>
        <begin position="8"/>
        <end position="18"/>
    </location>
    <ligand>
        <name>ATP</name>
        <dbReference type="ChEBI" id="CHEBI:30616"/>
    </ligand>
</feature>
<feature type="binding site" evidence="1">
    <location>
        <position position="186"/>
    </location>
    <ligand>
        <name>Zn(2+)</name>
        <dbReference type="ChEBI" id="CHEBI:29105"/>
    </ligand>
</feature>
<feature type="binding site" evidence="1">
    <location>
        <position position="196"/>
    </location>
    <ligand>
        <name>Zn(2+)</name>
        <dbReference type="ChEBI" id="CHEBI:29105"/>
    </ligand>
</feature>
<feature type="binding site" evidence="1">
    <location>
        <position position="199"/>
    </location>
    <ligand>
        <name>Zn(2+)</name>
        <dbReference type="ChEBI" id="CHEBI:29105"/>
    </ligand>
</feature>
<feature type="binding site" evidence="1">
    <location>
        <position position="202"/>
    </location>
    <ligand>
        <name>Zn(2+)</name>
        <dbReference type="ChEBI" id="CHEBI:29105"/>
    </ligand>
</feature>
<accession>Q87CW1</accession>
<keyword id="KW-0067">ATP-binding</keyword>
<keyword id="KW-0436">Ligase</keyword>
<keyword id="KW-0479">Metal-binding</keyword>
<keyword id="KW-0547">Nucleotide-binding</keyword>
<keyword id="KW-0671">Queuosine biosynthesis</keyword>
<keyword id="KW-1185">Reference proteome</keyword>
<keyword id="KW-0862">Zinc</keyword>
<reference key="1">
    <citation type="journal article" date="2003" name="J. Bacteriol.">
        <title>Comparative analyses of the complete genome sequences of Pierce's disease and citrus variegated chlorosis strains of Xylella fastidiosa.</title>
        <authorList>
            <person name="Van Sluys M.A."/>
            <person name="de Oliveira M.C."/>
            <person name="Monteiro-Vitorello C.B."/>
            <person name="Miyaki C.Y."/>
            <person name="Furlan L.R."/>
            <person name="Camargo L.E.A."/>
            <person name="da Silva A.C.R."/>
            <person name="Moon D.H."/>
            <person name="Takita M.A."/>
            <person name="Lemos E.G.M."/>
            <person name="Machado M.A."/>
            <person name="Ferro M.I.T."/>
            <person name="da Silva F.R."/>
            <person name="Goldman M.H.S."/>
            <person name="Goldman G.H."/>
            <person name="Lemos M.V.F."/>
            <person name="El-Dorry H."/>
            <person name="Tsai S.M."/>
            <person name="Carrer H."/>
            <person name="Carraro D.M."/>
            <person name="de Oliveira R.C."/>
            <person name="Nunes L.R."/>
            <person name="Siqueira W.J."/>
            <person name="Coutinho L.L."/>
            <person name="Kimura E.T."/>
            <person name="Ferro E.S."/>
            <person name="Harakava R."/>
            <person name="Kuramae E.E."/>
            <person name="Marino C.L."/>
            <person name="Giglioti E."/>
            <person name="Abreu I.L."/>
            <person name="Alves L.M.C."/>
            <person name="do Amaral A.M."/>
            <person name="Baia G.S."/>
            <person name="Blanco S.R."/>
            <person name="Brito M.S."/>
            <person name="Cannavan F.S."/>
            <person name="Celestino A.V."/>
            <person name="da Cunha A.F."/>
            <person name="Fenille R.C."/>
            <person name="Ferro J.A."/>
            <person name="Formighieri E.F."/>
            <person name="Kishi L.T."/>
            <person name="Leoni S.G."/>
            <person name="Oliveira A.R."/>
            <person name="Rosa V.E. Jr."/>
            <person name="Sassaki F.T."/>
            <person name="Sena J.A.D."/>
            <person name="de Souza A.A."/>
            <person name="Truffi D."/>
            <person name="Tsukumo F."/>
            <person name="Yanai G.M."/>
            <person name="Zaros L.G."/>
            <person name="Civerolo E.L."/>
            <person name="Simpson A.J.G."/>
            <person name="Almeida N.F. Jr."/>
            <person name="Setubal J.C."/>
            <person name="Kitajima J.P."/>
        </authorList>
    </citation>
    <scope>NUCLEOTIDE SEQUENCE [LARGE SCALE GENOMIC DNA]</scope>
    <source>
        <strain>Temecula1 / ATCC 700964</strain>
    </source>
</reference>
<protein>
    <recommendedName>
        <fullName evidence="1">7-cyano-7-deazaguanine synthase</fullName>
        <ecNumber evidence="1">6.3.4.20</ecNumber>
    </recommendedName>
    <alternativeName>
        <fullName evidence="1">7-cyano-7-carbaguanine synthase</fullName>
    </alternativeName>
    <alternativeName>
        <fullName evidence="1">PreQ(0) synthase</fullName>
    </alternativeName>
    <alternativeName>
        <fullName evidence="1">Queuosine biosynthesis protein QueC</fullName>
    </alternativeName>
</protein>
<gene>
    <name evidence="1" type="primary">queC</name>
    <name type="ordered locus">PD_0945</name>
</gene>
<dbReference type="EC" id="6.3.4.20" evidence="1"/>
<dbReference type="EMBL" id="AE009442">
    <property type="protein sequence ID" value="AAO28809.1"/>
    <property type="molecule type" value="Genomic_DNA"/>
</dbReference>
<dbReference type="RefSeq" id="WP_004089734.1">
    <property type="nucleotide sequence ID" value="NC_004556.1"/>
</dbReference>
<dbReference type="SMR" id="Q87CW1"/>
<dbReference type="GeneID" id="93904723"/>
<dbReference type="KEGG" id="xft:PD_0945"/>
<dbReference type="HOGENOM" id="CLU_081854_1_1_6"/>
<dbReference type="UniPathway" id="UPA00391"/>
<dbReference type="Proteomes" id="UP000002516">
    <property type="component" value="Chromosome"/>
</dbReference>
<dbReference type="GO" id="GO:0005524">
    <property type="term" value="F:ATP binding"/>
    <property type="evidence" value="ECO:0007669"/>
    <property type="project" value="UniProtKB-UniRule"/>
</dbReference>
<dbReference type="GO" id="GO:0016879">
    <property type="term" value="F:ligase activity, forming carbon-nitrogen bonds"/>
    <property type="evidence" value="ECO:0007669"/>
    <property type="project" value="UniProtKB-UniRule"/>
</dbReference>
<dbReference type="GO" id="GO:0008270">
    <property type="term" value="F:zinc ion binding"/>
    <property type="evidence" value="ECO:0007669"/>
    <property type="project" value="UniProtKB-UniRule"/>
</dbReference>
<dbReference type="GO" id="GO:0008616">
    <property type="term" value="P:queuosine biosynthetic process"/>
    <property type="evidence" value="ECO:0007669"/>
    <property type="project" value="UniProtKB-UniRule"/>
</dbReference>
<dbReference type="CDD" id="cd01995">
    <property type="entry name" value="QueC-like"/>
    <property type="match status" value="1"/>
</dbReference>
<dbReference type="FunFam" id="3.40.50.620:FF:000131">
    <property type="entry name" value="7-cyano-7-deazaguanine synthase"/>
    <property type="match status" value="1"/>
</dbReference>
<dbReference type="Gene3D" id="3.40.50.620">
    <property type="entry name" value="HUPs"/>
    <property type="match status" value="1"/>
</dbReference>
<dbReference type="HAMAP" id="MF_01633">
    <property type="entry name" value="QueC"/>
    <property type="match status" value="1"/>
</dbReference>
<dbReference type="InterPro" id="IPR018317">
    <property type="entry name" value="QueC"/>
</dbReference>
<dbReference type="InterPro" id="IPR014729">
    <property type="entry name" value="Rossmann-like_a/b/a_fold"/>
</dbReference>
<dbReference type="NCBIfam" id="TIGR00364">
    <property type="entry name" value="7-cyano-7-deazaguanine synthase QueC"/>
    <property type="match status" value="1"/>
</dbReference>
<dbReference type="PANTHER" id="PTHR42914">
    <property type="entry name" value="7-CYANO-7-DEAZAGUANINE SYNTHASE"/>
    <property type="match status" value="1"/>
</dbReference>
<dbReference type="PANTHER" id="PTHR42914:SF1">
    <property type="entry name" value="7-CYANO-7-DEAZAGUANINE SYNTHASE"/>
    <property type="match status" value="1"/>
</dbReference>
<dbReference type="Pfam" id="PF06508">
    <property type="entry name" value="QueC"/>
    <property type="match status" value="1"/>
</dbReference>
<dbReference type="PIRSF" id="PIRSF006293">
    <property type="entry name" value="ExsB"/>
    <property type="match status" value="1"/>
</dbReference>
<dbReference type="SUPFAM" id="SSF52402">
    <property type="entry name" value="Adenine nucleotide alpha hydrolases-like"/>
    <property type="match status" value="1"/>
</dbReference>
<evidence type="ECO:0000255" key="1">
    <source>
        <dbReference type="HAMAP-Rule" id="MF_01633"/>
    </source>
</evidence>
<sequence length="230" mass="24339">MKKAVILLSGGMDSAVVTAIAQSQGFMVHALSIRYGQRHTSELDAAVRIARALNVVAHKVVDVDLRSIGGSALTDDIEIPDAGGEGIPVTYVPARNTIMLSLALGWAEVIGAADIFCGVNAVDYSGYPDCRPQFITAFETLANLATKVGVEGTQLHVHAPLQFLSKAEIVHEGLLHGVDFGLTVSCYRADVDGRACGRCDACKLRVAGFADAGVVDPTRYMELPCSLLLL</sequence>
<name>QUEC_XYLFT</name>